<reference key="1">
    <citation type="journal article" date="2005" name="Nucleic Acids Res.">
        <title>Genome dynamics and diversity of Shigella species, the etiologic agents of bacillary dysentery.</title>
        <authorList>
            <person name="Yang F."/>
            <person name="Yang J."/>
            <person name="Zhang X."/>
            <person name="Chen L."/>
            <person name="Jiang Y."/>
            <person name="Yan Y."/>
            <person name="Tang X."/>
            <person name="Wang J."/>
            <person name="Xiong Z."/>
            <person name="Dong J."/>
            <person name="Xue Y."/>
            <person name="Zhu Y."/>
            <person name="Xu X."/>
            <person name="Sun L."/>
            <person name="Chen S."/>
            <person name="Nie H."/>
            <person name="Peng J."/>
            <person name="Xu J."/>
            <person name="Wang Y."/>
            <person name="Yuan Z."/>
            <person name="Wen Y."/>
            <person name="Yao Z."/>
            <person name="Shen Y."/>
            <person name="Qiang B."/>
            <person name="Hou Y."/>
            <person name="Yu J."/>
            <person name="Jin Q."/>
        </authorList>
    </citation>
    <scope>NUCLEOTIDE SEQUENCE [LARGE SCALE GENOMIC DNA]</scope>
    <source>
        <strain>Ss046</strain>
    </source>
</reference>
<proteinExistence type="inferred from homology"/>
<evidence type="ECO:0000250" key="1"/>
<evidence type="ECO:0000255" key="2"/>
<evidence type="ECO:0000255" key="3">
    <source>
        <dbReference type="PROSITE-ProRule" id="PRU00095"/>
    </source>
</evidence>
<gene>
    <name type="primary">dosC</name>
    <name type="ordered locus">SSON_1634</name>
</gene>
<feature type="chain" id="PRO_0000316157" description="Diguanylate cyclase DosC">
    <location>
        <begin position="1"/>
        <end position="460"/>
    </location>
</feature>
<feature type="domain" description="GGDEF" evidence="3">
    <location>
        <begin position="325"/>
        <end position="458"/>
    </location>
</feature>
<feature type="active site" description="Proton acceptor" evidence="2">
    <location>
        <position position="376"/>
    </location>
</feature>
<feature type="binding site" description="proximal binding residue" evidence="1">
    <location>
        <position position="98"/>
    </location>
    <ligand>
        <name>heme</name>
        <dbReference type="ChEBI" id="CHEBI:30413"/>
    </ligand>
    <ligandPart>
        <name>Fe</name>
        <dbReference type="ChEBI" id="CHEBI:18248"/>
    </ligandPart>
</feature>
<feature type="binding site" evidence="1">
    <location>
        <position position="333"/>
    </location>
    <ligand>
        <name>Mg(2+)</name>
        <dbReference type="ChEBI" id="CHEBI:18420"/>
    </ligand>
</feature>
<feature type="binding site" evidence="1">
    <location>
        <position position="341"/>
    </location>
    <ligand>
        <name>substrate</name>
    </ligand>
</feature>
<feature type="binding site" evidence="1">
    <location>
        <position position="350"/>
    </location>
    <ligand>
        <name>substrate</name>
    </ligand>
</feature>
<feature type="binding site" evidence="1">
    <location>
        <position position="376"/>
    </location>
    <ligand>
        <name>Mg(2+)</name>
        <dbReference type="ChEBI" id="CHEBI:18420"/>
    </ligand>
</feature>
<feature type="site" description="Involved in oxygen binding and important for the stability of the Fe(II)-O(2) complex" evidence="1">
    <location>
        <position position="43"/>
    </location>
</feature>
<feature type="site" description="Important for oxygen binding and stability of the Fe(II)-O(2) complex" evidence="1">
    <location>
        <position position="60"/>
    </location>
</feature>
<feature type="site" description="Critical for restricting water access to the heme distal side to avoid rapid autoxidation" evidence="1">
    <location>
        <position position="65"/>
    </location>
</feature>
<feature type="site" description="Transition state stabilizer" evidence="2">
    <location>
        <position position="338"/>
    </location>
</feature>
<protein>
    <recommendedName>
        <fullName>Diguanylate cyclase DosC</fullName>
        <shortName>DGC</shortName>
        <ecNumber>2.7.7.65</ecNumber>
    </recommendedName>
    <alternativeName>
        <fullName>Direct oxygen-sensing cyclase</fullName>
    </alternativeName>
</protein>
<keyword id="KW-0342">GTP-binding</keyword>
<keyword id="KW-0349">Heme</keyword>
<keyword id="KW-0408">Iron</keyword>
<keyword id="KW-0460">Magnesium</keyword>
<keyword id="KW-0479">Metal-binding</keyword>
<keyword id="KW-0547">Nucleotide-binding</keyword>
<keyword id="KW-1185">Reference proteome</keyword>
<keyword id="KW-0808">Transferase</keyword>
<sequence length="460" mass="53175">MEMYFKRMKDEWTGLVEQADPLIRAKAAEIAVAHAHYLSIEFYRIVRIDPHAEEFLSNEQVERQLKSAMERWIINVLSAQVDDVERLIQIQHTVAEVHARIGIPVEIVEMGFRVLKKILYPVIFSSDYSAAEKLQVYHFSINSIDIAMEVMTRAFTFSDSSASKEDENYRIFSLLENAEEEKERQIASILSWEIDIIYKILLDSDLGSSLPLSQADFGLWFNHKGRHYFSGIAEVGHISRLIQDFDGIFNQTMRNTRNLNNRSLRVKFLLQIRNTVSQIITLLRELFEEVSRHEVGMDVLTKLLNRRFLPTIFKREIAHANRTGTPLSVLIIDVDKFKEINDTWGHNTGDEILRKVSQAFYDNVHSSDYVFRYGGDEFIIVLTEASENETLRTAERIRSRVEKTKLKAANGEDIALSLSIGAAMFNGHPDYERLIQIADEALYIAKRRGRNRVELWKASL</sequence>
<name>DOSC_SHISS</name>
<comment type="function">
    <text evidence="1">Globin-coupled heme-based oxygen sensor protein displaying diguanylate cyclase (DGC) activity in response to oxygen availability. Thus, catalyzes the synthesis of cyclic diguanylate (c-di-GMP) via the condensation of 2 GTP molecules. Cyclic-di-GMP is a second messenger which controls cell surface-associated traits in bacteria (By similarity).</text>
</comment>
<comment type="catalytic activity">
    <reaction>
        <text>2 GTP = 3',3'-c-di-GMP + 2 diphosphate</text>
        <dbReference type="Rhea" id="RHEA:24898"/>
        <dbReference type="ChEBI" id="CHEBI:33019"/>
        <dbReference type="ChEBI" id="CHEBI:37565"/>
        <dbReference type="ChEBI" id="CHEBI:58805"/>
        <dbReference type="EC" id="2.7.7.65"/>
    </reaction>
</comment>
<comment type="cofactor">
    <cofactor evidence="1">
        <name>heme</name>
        <dbReference type="ChEBI" id="CHEBI:30413"/>
    </cofactor>
    <text evidence="1">Binds 1 heme group per subunit.</text>
</comment>
<comment type="cofactor">
    <cofactor evidence="1">
        <name>Mg(2+)</name>
        <dbReference type="ChEBI" id="CHEBI:18420"/>
    </cofactor>
    <text evidence="1">Binds 1 Mg(2+) ion per subunit.</text>
</comment>
<comment type="pathway">
    <text>Purine metabolism; 3',5'-cyclic di-GMP biosynthesis.</text>
</comment>
<comment type="domain">
    <text evidence="1">Is composed of an N-terminal sensory globin-fold domain that binds heme and oxygen, and a C-terminal GGDEF diguanylate cyclase domain.</text>
</comment>
<dbReference type="EC" id="2.7.7.65"/>
<dbReference type="EMBL" id="CP000038">
    <property type="protein sequence ID" value="AAZ88329.1"/>
    <property type="molecule type" value="Genomic_DNA"/>
</dbReference>
<dbReference type="RefSeq" id="WP_005146315.1">
    <property type="nucleotide sequence ID" value="NC_007384.1"/>
</dbReference>
<dbReference type="SMR" id="Q3Z1N3"/>
<dbReference type="GeneID" id="93775649"/>
<dbReference type="KEGG" id="ssn:SSON_1634"/>
<dbReference type="HOGENOM" id="CLU_000445_11_5_6"/>
<dbReference type="UniPathway" id="UPA00599"/>
<dbReference type="Proteomes" id="UP000002529">
    <property type="component" value="Chromosome"/>
</dbReference>
<dbReference type="GO" id="GO:0005886">
    <property type="term" value="C:plasma membrane"/>
    <property type="evidence" value="ECO:0007669"/>
    <property type="project" value="TreeGrafter"/>
</dbReference>
<dbReference type="GO" id="GO:0052621">
    <property type="term" value="F:diguanylate cyclase activity"/>
    <property type="evidence" value="ECO:0007669"/>
    <property type="project" value="UniProtKB-EC"/>
</dbReference>
<dbReference type="GO" id="GO:0005525">
    <property type="term" value="F:GTP binding"/>
    <property type="evidence" value="ECO:0007669"/>
    <property type="project" value="UniProtKB-KW"/>
</dbReference>
<dbReference type="GO" id="GO:0020037">
    <property type="term" value="F:heme binding"/>
    <property type="evidence" value="ECO:0007669"/>
    <property type="project" value="InterPro"/>
</dbReference>
<dbReference type="GO" id="GO:0046872">
    <property type="term" value="F:metal ion binding"/>
    <property type="evidence" value="ECO:0007669"/>
    <property type="project" value="UniProtKB-KW"/>
</dbReference>
<dbReference type="GO" id="GO:0019825">
    <property type="term" value="F:oxygen binding"/>
    <property type="evidence" value="ECO:0007669"/>
    <property type="project" value="InterPro"/>
</dbReference>
<dbReference type="GO" id="GO:0043709">
    <property type="term" value="P:cell adhesion involved in single-species biofilm formation"/>
    <property type="evidence" value="ECO:0007669"/>
    <property type="project" value="TreeGrafter"/>
</dbReference>
<dbReference type="GO" id="GO:1902201">
    <property type="term" value="P:negative regulation of bacterial-type flagellum-dependent cell motility"/>
    <property type="evidence" value="ECO:0007669"/>
    <property type="project" value="TreeGrafter"/>
</dbReference>
<dbReference type="CDD" id="cd01949">
    <property type="entry name" value="GGDEF"/>
    <property type="match status" value="1"/>
</dbReference>
<dbReference type="CDD" id="cd14757">
    <property type="entry name" value="GS_EcDosC-like_GGDEF"/>
    <property type="match status" value="1"/>
</dbReference>
<dbReference type="FunFam" id="3.30.70.270:FF:000001">
    <property type="entry name" value="Diguanylate cyclase domain protein"/>
    <property type="match status" value="1"/>
</dbReference>
<dbReference type="FunFam" id="1.10.490.10:FF:000007">
    <property type="entry name" value="Diguanylate cyclase DosC"/>
    <property type="match status" value="1"/>
</dbReference>
<dbReference type="Gene3D" id="3.30.70.270">
    <property type="match status" value="1"/>
</dbReference>
<dbReference type="Gene3D" id="1.10.490.10">
    <property type="entry name" value="Globins"/>
    <property type="match status" value="1"/>
</dbReference>
<dbReference type="InterPro" id="IPR050469">
    <property type="entry name" value="Diguanylate_Cyclase"/>
</dbReference>
<dbReference type="InterPro" id="IPR048442">
    <property type="entry name" value="DosC_2nd"/>
</dbReference>
<dbReference type="InterPro" id="IPR039435">
    <property type="entry name" value="DosC_GS"/>
</dbReference>
<dbReference type="InterPro" id="IPR000160">
    <property type="entry name" value="GGDEF_dom"/>
</dbReference>
<dbReference type="InterPro" id="IPR009050">
    <property type="entry name" value="Globin-like_sf"/>
</dbReference>
<dbReference type="InterPro" id="IPR044398">
    <property type="entry name" value="Globin-sensor_dom"/>
</dbReference>
<dbReference type="InterPro" id="IPR012292">
    <property type="entry name" value="Globin/Proto"/>
</dbReference>
<dbReference type="InterPro" id="IPR029787">
    <property type="entry name" value="Nucleotide_cyclase"/>
</dbReference>
<dbReference type="InterPro" id="IPR043128">
    <property type="entry name" value="Rev_trsase/Diguanyl_cyclase"/>
</dbReference>
<dbReference type="NCBIfam" id="TIGR00254">
    <property type="entry name" value="GGDEF"/>
    <property type="match status" value="1"/>
</dbReference>
<dbReference type="PANTHER" id="PTHR45138:SF9">
    <property type="entry name" value="DIGUANYLATE CYCLASE DGCM-RELATED"/>
    <property type="match status" value="1"/>
</dbReference>
<dbReference type="PANTHER" id="PTHR45138">
    <property type="entry name" value="REGULATORY COMPONENTS OF SENSORY TRANSDUCTION SYSTEM"/>
    <property type="match status" value="1"/>
</dbReference>
<dbReference type="Pfam" id="PF21118">
    <property type="entry name" value="DosC_2nd"/>
    <property type="match status" value="1"/>
</dbReference>
<dbReference type="Pfam" id="PF00990">
    <property type="entry name" value="GGDEF"/>
    <property type="match status" value="1"/>
</dbReference>
<dbReference type="Pfam" id="PF11563">
    <property type="entry name" value="Protoglobin"/>
    <property type="match status" value="1"/>
</dbReference>
<dbReference type="SMART" id="SM00267">
    <property type="entry name" value="GGDEF"/>
    <property type="match status" value="1"/>
</dbReference>
<dbReference type="SUPFAM" id="SSF46458">
    <property type="entry name" value="Globin-like"/>
    <property type="match status" value="1"/>
</dbReference>
<dbReference type="SUPFAM" id="SSF55073">
    <property type="entry name" value="Nucleotide cyclase"/>
    <property type="match status" value="1"/>
</dbReference>
<dbReference type="PROSITE" id="PS50887">
    <property type="entry name" value="GGDEF"/>
    <property type="match status" value="1"/>
</dbReference>
<accession>Q3Z1N3</accession>
<organism>
    <name type="scientific">Shigella sonnei (strain Ss046)</name>
    <dbReference type="NCBI Taxonomy" id="300269"/>
    <lineage>
        <taxon>Bacteria</taxon>
        <taxon>Pseudomonadati</taxon>
        <taxon>Pseudomonadota</taxon>
        <taxon>Gammaproteobacteria</taxon>
        <taxon>Enterobacterales</taxon>
        <taxon>Enterobacteriaceae</taxon>
        <taxon>Shigella</taxon>
    </lineage>
</organism>